<gene>
    <name evidence="1" type="primary">rpsU</name>
    <name type="ordered locus">PputGB1_0420</name>
</gene>
<feature type="chain" id="PRO_1000079415" description="Small ribosomal subunit protein bS21">
    <location>
        <begin position="1"/>
        <end position="71"/>
    </location>
</feature>
<feature type="region of interest" description="Disordered" evidence="2">
    <location>
        <begin position="50"/>
        <end position="71"/>
    </location>
</feature>
<feature type="compositionally biased region" description="Basic residues" evidence="2">
    <location>
        <begin position="50"/>
        <end position="59"/>
    </location>
</feature>
<feature type="compositionally biased region" description="Basic and acidic residues" evidence="2">
    <location>
        <begin position="60"/>
        <end position="71"/>
    </location>
</feature>
<keyword id="KW-0687">Ribonucleoprotein</keyword>
<keyword id="KW-0689">Ribosomal protein</keyword>
<comment type="similarity">
    <text evidence="1">Belongs to the bacterial ribosomal protein bS21 family.</text>
</comment>
<accession>B0KJ81</accession>
<proteinExistence type="inferred from homology"/>
<reference key="1">
    <citation type="submission" date="2008-01" db="EMBL/GenBank/DDBJ databases">
        <title>Complete sequence of Pseudomonas putida GB-1.</title>
        <authorList>
            <consortium name="US DOE Joint Genome Institute"/>
            <person name="Copeland A."/>
            <person name="Lucas S."/>
            <person name="Lapidus A."/>
            <person name="Barry K."/>
            <person name="Glavina del Rio T."/>
            <person name="Dalin E."/>
            <person name="Tice H."/>
            <person name="Pitluck S."/>
            <person name="Bruce D."/>
            <person name="Goodwin L."/>
            <person name="Chertkov O."/>
            <person name="Brettin T."/>
            <person name="Detter J.C."/>
            <person name="Han C."/>
            <person name="Kuske C.R."/>
            <person name="Schmutz J."/>
            <person name="Larimer F."/>
            <person name="Land M."/>
            <person name="Hauser L."/>
            <person name="Kyrpides N."/>
            <person name="Kim E."/>
            <person name="McCarthy J.K."/>
            <person name="Richardson P."/>
        </authorList>
    </citation>
    <scope>NUCLEOTIDE SEQUENCE [LARGE SCALE GENOMIC DNA]</scope>
    <source>
        <strain>GB-1</strain>
    </source>
</reference>
<name>RS21_PSEPG</name>
<evidence type="ECO:0000255" key="1">
    <source>
        <dbReference type="HAMAP-Rule" id="MF_00358"/>
    </source>
</evidence>
<evidence type="ECO:0000256" key="2">
    <source>
        <dbReference type="SAM" id="MobiDB-lite"/>
    </source>
</evidence>
<evidence type="ECO:0000305" key="3"/>
<protein>
    <recommendedName>
        <fullName evidence="1">Small ribosomal subunit protein bS21</fullName>
    </recommendedName>
    <alternativeName>
        <fullName evidence="3">30S ribosomal protein S21</fullName>
    </alternativeName>
</protein>
<sequence length="71" mass="8370">MPAVKVKENEPFDVALRRFKRSCEKAGVLAEVRSREFYEKPTAERKRKAAAAVKRHAKKVQREQRRAVRLY</sequence>
<organism>
    <name type="scientific">Pseudomonas putida (strain GB-1)</name>
    <dbReference type="NCBI Taxonomy" id="76869"/>
    <lineage>
        <taxon>Bacteria</taxon>
        <taxon>Pseudomonadati</taxon>
        <taxon>Pseudomonadota</taxon>
        <taxon>Gammaproteobacteria</taxon>
        <taxon>Pseudomonadales</taxon>
        <taxon>Pseudomonadaceae</taxon>
        <taxon>Pseudomonas</taxon>
    </lineage>
</organism>
<dbReference type="EMBL" id="CP000926">
    <property type="protein sequence ID" value="ABY96331.1"/>
    <property type="molecule type" value="Genomic_DNA"/>
</dbReference>
<dbReference type="RefSeq" id="WP_003255575.1">
    <property type="nucleotide sequence ID" value="NC_010322.1"/>
</dbReference>
<dbReference type="SMR" id="B0KJ81"/>
<dbReference type="GeneID" id="97165908"/>
<dbReference type="KEGG" id="ppg:PputGB1_0420"/>
<dbReference type="eggNOG" id="COG0828">
    <property type="taxonomic scope" value="Bacteria"/>
</dbReference>
<dbReference type="HOGENOM" id="CLU_159258_1_0_6"/>
<dbReference type="Proteomes" id="UP000002157">
    <property type="component" value="Chromosome"/>
</dbReference>
<dbReference type="GO" id="GO:1990904">
    <property type="term" value="C:ribonucleoprotein complex"/>
    <property type="evidence" value="ECO:0007669"/>
    <property type="project" value="UniProtKB-KW"/>
</dbReference>
<dbReference type="GO" id="GO:0005840">
    <property type="term" value="C:ribosome"/>
    <property type="evidence" value="ECO:0007669"/>
    <property type="project" value="UniProtKB-KW"/>
</dbReference>
<dbReference type="GO" id="GO:0003735">
    <property type="term" value="F:structural constituent of ribosome"/>
    <property type="evidence" value="ECO:0007669"/>
    <property type="project" value="InterPro"/>
</dbReference>
<dbReference type="GO" id="GO:0006412">
    <property type="term" value="P:translation"/>
    <property type="evidence" value="ECO:0007669"/>
    <property type="project" value="UniProtKB-UniRule"/>
</dbReference>
<dbReference type="Gene3D" id="1.20.5.1150">
    <property type="entry name" value="Ribosomal protein S8"/>
    <property type="match status" value="1"/>
</dbReference>
<dbReference type="HAMAP" id="MF_00358">
    <property type="entry name" value="Ribosomal_bS21"/>
    <property type="match status" value="1"/>
</dbReference>
<dbReference type="InterPro" id="IPR001911">
    <property type="entry name" value="Ribosomal_bS21"/>
</dbReference>
<dbReference type="InterPro" id="IPR018278">
    <property type="entry name" value="Ribosomal_bS21_CS"/>
</dbReference>
<dbReference type="InterPro" id="IPR038380">
    <property type="entry name" value="Ribosomal_bS21_sf"/>
</dbReference>
<dbReference type="NCBIfam" id="TIGR00030">
    <property type="entry name" value="S21p"/>
    <property type="match status" value="1"/>
</dbReference>
<dbReference type="PANTHER" id="PTHR21109">
    <property type="entry name" value="MITOCHONDRIAL 28S RIBOSOMAL PROTEIN S21"/>
    <property type="match status" value="1"/>
</dbReference>
<dbReference type="PANTHER" id="PTHR21109:SF22">
    <property type="entry name" value="SMALL RIBOSOMAL SUBUNIT PROTEIN BS21"/>
    <property type="match status" value="1"/>
</dbReference>
<dbReference type="Pfam" id="PF01165">
    <property type="entry name" value="Ribosomal_S21"/>
    <property type="match status" value="1"/>
</dbReference>
<dbReference type="PRINTS" id="PR00976">
    <property type="entry name" value="RIBOSOMALS21"/>
</dbReference>
<dbReference type="PROSITE" id="PS01181">
    <property type="entry name" value="RIBOSOMAL_S21"/>
    <property type="match status" value="1"/>
</dbReference>